<dbReference type="EMBL" id="AY673996">
    <property type="protein sequence ID" value="AAT79671.1"/>
    <property type="molecule type" value="Genomic_DNA"/>
</dbReference>
<dbReference type="RefSeq" id="YP_063596.1">
    <property type="nucleotide sequence ID" value="NC_006137.1"/>
</dbReference>
<dbReference type="SMR" id="Q6B8W4"/>
<dbReference type="GeneID" id="2944127"/>
<dbReference type="GO" id="GO:0009507">
    <property type="term" value="C:chloroplast"/>
    <property type="evidence" value="ECO:0007669"/>
    <property type="project" value="UniProtKB-SubCell"/>
</dbReference>
<dbReference type="GO" id="GO:1990904">
    <property type="term" value="C:ribonucleoprotein complex"/>
    <property type="evidence" value="ECO:0007669"/>
    <property type="project" value="UniProtKB-KW"/>
</dbReference>
<dbReference type="GO" id="GO:0005840">
    <property type="term" value="C:ribosome"/>
    <property type="evidence" value="ECO:0007669"/>
    <property type="project" value="UniProtKB-KW"/>
</dbReference>
<dbReference type="GO" id="GO:0019843">
    <property type="term" value="F:rRNA binding"/>
    <property type="evidence" value="ECO:0007669"/>
    <property type="project" value="UniProtKB-UniRule"/>
</dbReference>
<dbReference type="GO" id="GO:0003735">
    <property type="term" value="F:structural constituent of ribosome"/>
    <property type="evidence" value="ECO:0007669"/>
    <property type="project" value="InterPro"/>
</dbReference>
<dbReference type="GO" id="GO:0006412">
    <property type="term" value="P:translation"/>
    <property type="evidence" value="ECO:0007669"/>
    <property type="project" value="UniProtKB-UniRule"/>
</dbReference>
<dbReference type="CDD" id="cd06089">
    <property type="entry name" value="KOW_RPL26"/>
    <property type="match status" value="1"/>
</dbReference>
<dbReference type="Gene3D" id="2.30.30.30">
    <property type="match status" value="1"/>
</dbReference>
<dbReference type="HAMAP" id="MF_01326_B">
    <property type="entry name" value="Ribosomal_uL24_B"/>
    <property type="match status" value="1"/>
</dbReference>
<dbReference type="InterPro" id="IPR005824">
    <property type="entry name" value="KOW"/>
</dbReference>
<dbReference type="InterPro" id="IPR014722">
    <property type="entry name" value="Rib_uL2_dom2"/>
</dbReference>
<dbReference type="InterPro" id="IPR003256">
    <property type="entry name" value="Ribosomal_uL24"/>
</dbReference>
<dbReference type="InterPro" id="IPR041988">
    <property type="entry name" value="Ribosomal_uL24_KOW"/>
</dbReference>
<dbReference type="InterPro" id="IPR008991">
    <property type="entry name" value="Translation_prot_SH3-like_sf"/>
</dbReference>
<dbReference type="NCBIfam" id="TIGR01079">
    <property type="entry name" value="rplX_bact"/>
    <property type="match status" value="1"/>
</dbReference>
<dbReference type="PANTHER" id="PTHR12903">
    <property type="entry name" value="MITOCHONDRIAL RIBOSOMAL PROTEIN L24"/>
    <property type="match status" value="1"/>
</dbReference>
<dbReference type="Pfam" id="PF00467">
    <property type="entry name" value="KOW"/>
    <property type="match status" value="1"/>
</dbReference>
<dbReference type="Pfam" id="PF17136">
    <property type="entry name" value="ribosomal_L24"/>
    <property type="match status" value="1"/>
</dbReference>
<dbReference type="SMART" id="SM00739">
    <property type="entry name" value="KOW"/>
    <property type="match status" value="1"/>
</dbReference>
<dbReference type="SUPFAM" id="SSF50104">
    <property type="entry name" value="Translation proteins SH3-like domain"/>
    <property type="match status" value="1"/>
</dbReference>
<evidence type="ECO:0000250" key="1"/>
<evidence type="ECO:0000305" key="2"/>
<name>RK24_GRATL</name>
<accession>Q6B8W4</accession>
<sequence>MKMKKTNIKMHVKRGETVQIISGREKGKIGKIIKVLPKSSQVIIDNLNIATKHLKAQKEGDSGQIIRIEKPIHSSNVIQYKLDSNTSIKDRV</sequence>
<gene>
    <name type="primary">rpl24</name>
    <name type="ordered locus">Grc000090</name>
</gene>
<feature type="chain" id="PRO_0000130761" description="Large ribosomal subunit protein uL24c">
    <location>
        <begin position="1"/>
        <end position="92"/>
    </location>
</feature>
<protein>
    <recommendedName>
        <fullName evidence="2">Large ribosomal subunit protein uL24c</fullName>
    </recommendedName>
    <alternativeName>
        <fullName>50S ribosomal protein L24, chloroplastic</fullName>
    </alternativeName>
</protein>
<comment type="function">
    <text evidence="1">One of two assembly initiator proteins, it binds directly to the 5'-end of the 23S rRNA, where it nucleates assembly of the 50S subunit.</text>
</comment>
<comment type="subunit">
    <text evidence="1">Part of the 50S ribosomal subunit.</text>
</comment>
<comment type="subcellular location">
    <subcellularLocation>
        <location>Plastid</location>
        <location>Chloroplast</location>
    </subcellularLocation>
</comment>
<comment type="similarity">
    <text evidence="2">Belongs to the universal ribosomal protein uL24 family.</text>
</comment>
<proteinExistence type="inferred from homology"/>
<geneLocation type="chloroplast"/>
<reference key="1">
    <citation type="journal article" date="2004" name="J. Mol. Evol.">
        <title>Comparative analysis of the complete plastid genome sequence of the red alga Gracilaria tenuistipitata var. liui provides insights into the evolution of rhodoplasts and their relationship to other plastids.</title>
        <authorList>
            <person name="Hagopian J.C."/>
            <person name="Reis M."/>
            <person name="Kitajima J.P."/>
            <person name="Bhattacharya D."/>
            <person name="de Oliveira M.C."/>
        </authorList>
    </citation>
    <scope>NUCLEOTIDE SEQUENCE [LARGE SCALE GENOMIC DNA]</scope>
</reference>
<organism>
    <name type="scientific">Gracilaria tenuistipitata var. liui</name>
    <name type="common">Red alga</name>
    <dbReference type="NCBI Taxonomy" id="285951"/>
    <lineage>
        <taxon>Eukaryota</taxon>
        <taxon>Rhodophyta</taxon>
        <taxon>Florideophyceae</taxon>
        <taxon>Rhodymeniophycidae</taxon>
        <taxon>Gracilariales</taxon>
        <taxon>Gracilariaceae</taxon>
        <taxon>Gracilaria</taxon>
        <taxon>Gracilaria tenuistipitata</taxon>
    </lineage>
</organism>
<keyword id="KW-0150">Chloroplast</keyword>
<keyword id="KW-0934">Plastid</keyword>
<keyword id="KW-0687">Ribonucleoprotein</keyword>
<keyword id="KW-0689">Ribosomal protein</keyword>
<keyword id="KW-0694">RNA-binding</keyword>
<keyword id="KW-0699">rRNA-binding</keyword>